<gene>
    <name evidence="1" type="primary">rpsG</name>
    <name type="ordered locus">BDU_380</name>
</gene>
<evidence type="ECO:0000255" key="1">
    <source>
        <dbReference type="HAMAP-Rule" id="MF_00480"/>
    </source>
</evidence>
<evidence type="ECO:0000305" key="2"/>
<protein>
    <recommendedName>
        <fullName evidence="1">Small ribosomal subunit protein uS7</fullName>
    </recommendedName>
    <alternativeName>
        <fullName evidence="2">30S ribosomal protein S7</fullName>
    </alternativeName>
</protein>
<comment type="function">
    <text evidence="1">One of the primary rRNA binding proteins, it binds directly to 16S rRNA where it nucleates assembly of the head domain of the 30S subunit. Is located at the subunit interface close to the decoding center, probably blocks exit of the E-site tRNA.</text>
</comment>
<comment type="subunit">
    <text evidence="1">Part of the 30S ribosomal subunit. Contacts proteins S9 and S11.</text>
</comment>
<comment type="similarity">
    <text evidence="1">Belongs to the universal ribosomal protein uS7 family.</text>
</comment>
<accession>B5RLU6</accession>
<keyword id="KW-0687">Ribonucleoprotein</keyword>
<keyword id="KW-0689">Ribosomal protein</keyword>
<keyword id="KW-0694">RNA-binding</keyword>
<keyword id="KW-0699">rRNA-binding</keyword>
<keyword id="KW-0820">tRNA-binding</keyword>
<sequence length="157" mass="18145">MSRKSKKIKKKVFKDSKYDSQVIAKFVNRMMYDGKKFISESIVYNSIDMLAEKLEEVDKVAAFNKALDNVKPLVEVRSRRVGGATYQVPVEVREERREALAMKWIISAARKASGKSMQEKLANELVNSYNSTGAAFKKREDTHRMAEANRAFTHYRW</sequence>
<name>RS7_BORDL</name>
<feature type="chain" id="PRO_1000125900" description="Small ribosomal subunit protein uS7">
    <location>
        <begin position="1"/>
        <end position="157"/>
    </location>
</feature>
<reference key="1">
    <citation type="journal article" date="2008" name="PLoS Genet.">
        <title>The genome of Borrelia recurrentis, the agent of deadly louse-borne relapsing fever, is a degraded subset of tick-borne Borrelia duttonii.</title>
        <authorList>
            <person name="Lescot M."/>
            <person name="Audic S."/>
            <person name="Robert C."/>
            <person name="Nguyen T.T."/>
            <person name="Blanc G."/>
            <person name="Cutler S.J."/>
            <person name="Wincker P."/>
            <person name="Couloux A."/>
            <person name="Claverie J.-M."/>
            <person name="Raoult D."/>
            <person name="Drancourt M."/>
        </authorList>
    </citation>
    <scope>NUCLEOTIDE SEQUENCE [LARGE SCALE GENOMIC DNA]</scope>
    <source>
        <strain>Ly</strain>
    </source>
</reference>
<organism>
    <name type="scientific">Borrelia duttonii (strain Ly)</name>
    <dbReference type="NCBI Taxonomy" id="412419"/>
    <lineage>
        <taxon>Bacteria</taxon>
        <taxon>Pseudomonadati</taxon>
        <taxon>Spirochaetota</taxon>
        <taxon>Spirochaetia</taxon>
        <taxon>Spirochaetales</taxon>
        <taxon>Borreliaceae</taxon>
        <taxon>Borrelia</taxon>
    </lineage>
</organism>
<proteinExistence type="inferred from homology"/>
<dbReference type="EMBL" id="CP000976">
    <property type="protein sequence ID" value="ACH93332.1"/>
    <property type="molecule type" value="Genomic_DNA"/>
</dbReference>
<dbReference type="RefSeq" id="WP_012538143.1">
    <property type="nucleotide sequence ID" value="NC_011229.1"/>
</dbReference>
<dbReference type="SMR" id="B5RLU6"/>
<dbReference type="STRING" id="412419.BDU_380"/>
<dbReference type="KEGG" id="bdu:BDU_380"/>
<dbReference type="eggNOG" id="COG0049">
    <property type="taxonomic scope" value="Bacteria"/>
</dbReference>
<dbReference type="HOGENOM" id="CLU_072226_1_1_12"/>
<dbReference type="OrthoDB" id="9807653at2"/>
<dbReference type="Proteomes" id="UP000000611">
    <property type="component" value="Chromosome"/>
</dbReference>
<dbReference type="GO" id="GO:0015935">
    <property type="term" value="C:small ribosomal subunit"/>
    <property type="evidence" value="ECO:0007669"/>
    <property type="project" value="InterPro"/>
</dbReference>
<dbReference type="GO" id="GO:0019843">
    <property type="term" value="F:rRNA binding"/>
    <property type="evidence" value="ECO:0007669"/>
    <property type="project" value="UniProtKB-UniRule"/>
</dbReference>
<dbReference type="GO" id="GO:0003735">
    <property type="term" value="F:structural constituent of ribosome"/>
    <property type="evidence" value="ECO:0007669"/>
    <property type="project" value="InterPro"/>
</dbReference>
<dbReference type="GO" id="GO:0000049">
    <property type="term" value="F:tRNA binding"/>
    <property type="evidence" value="ECO:0007669"/>
    <property type="project" value="UniProtKB-UniRule"/>
</dbReference>
<dbReference type="GO" id="GO:0006412">
    <property type="term" value="P:translation"/>
    <property type="evidence" value="ECO:0007669"/>
    <property type="project" value="UniProtKB-UniRule"/>
</dbReference>
<dbReference type="CDD" id="cd14869">
    <property type="entry name" value="uS7_Bacteria"/>
    <property type="match status" value="1"/>
</dbReference>
<dbReference type="FunFam" id="1.10.455.10:FF:000001">
    <property type="entry name" value="30S ribosomal protein S7"/>
    <property type="match status" value="1"/>
</dbReference>
<dbReference type="Gene3D" id="1.10.455.10">
    <property type="entry name" value="Ribosomal protein S7 domain"/>
    <property type="match status" value="1"/>
</dbReference>
<dbReference type="HAMAP" id="MF_00480_B">
    <property type="entry name" value="Ribosomal_uS7_B"/>
    <property type="match status" value="1"/>
</dbReference>
<dbReference type="InterPro" id="IPR000235">
    <property type="entry name" value="Ribosomal_uS7"/>
</dbReference>
<dbReference type="InterPro" id="IPR005717">
    <property type="entry name" value="Ribosomal_uS7_bac/org-type"/>
</dbReference>
<dbReference type="InterPro" id="IPR020606">
    <property type="entry name" value="Ribosomal_uS7_CS"/>
</dbReference>
<dbReference type="InterPro" id="IPR023798">
    <property type="entry name" value="Ribosomal_uS7_dom"/>
</dbReference>
<dbReference type="InterPro" id="IPR036823">
    <property type="entry name" value="Ribosomal_uS7_dom_sf"/>
</dbReference>
<dbReference type="NCBIfam" id="TIGR01029">
    <property type="entry name" value="rpsG_bact"/>
    <property type="match status" value="1"/>
</dbReference>
<dbReference type="PANTHER" id="PTHR11205">
    <property type="entry name" value="RIBOSOMAL PROTEIN S7"/>
    <property type="match status" value="1"/>
</dbReference>
<dbReference type="Pfam" id="PF00177">
    <property type="entry name" value="Ribosomal_S7"/>
    <property type="match status" value="1"/>
</dbReference>
<dbReference type="PIRSF" id="PIRSF002122">
    <property type="entry name" value="RPS7p_RPS7a_RPS5e_RPS7o"/>
    <property type="match status" value="1"/>
</dbReference>
<dbReference type="SUPFAM" id="SSF47973">
    <property type="entry name" value="Ribosomal protein S7"/>
    <property type="match status" value="1"/>
</dbReference>
<dbReference type="PROSITE" id="PS00052">
    <property type="entry name" value="RIBOSOMAL_S7"/>
    <property type="match status" value="1"/>
</dbReference>